<gene>
    <name evidence="1" type="primary">smpB</name>
    <name type="ordered locus">LI0225</name>
</gene>
<feature type="chain" id="PRO_0000331060" description="SsrA-binding protein">
    <location>
        <begin position="1"/>
        <end position="155"/>
    </location>
</feature>
<proteinExistence type="inferred from homology"/>
<evidence type="ECO:0000255" key="1">
    <source>
        <dbReference type="HAMAP-Rule" id="MF_00023"/>
    </source>
</evidence>
<sequence>MSAKKNSHLVFENRKARHLYDLLDFLEAGIVLTGPEVKSLRSGHASFQDSYVDFKQGEGYIVGLHIPPYNNAGYVIQNPDRPRKLLLHRQELKMLASKVEQKGLTIVPLKLYFKNRKVKTEIALAKGRKLYDHRNELKKRAEAMDIKRELAARHL</sequence>
<accession>Q1MRU5</accession>
<keyword id="KW-0963">Cytoplasm</keyword>
<keyword id="KW-1185">Reference proteome</keyword>
<keyword id="KW-0694">RNA-binding</keyword>
<reference key="1">
    <citation type="submission" date="2005-11" db="EMBL/GenBank/DDBJ databases">
        <title>The complete genome sequence of Lawsonia intracellularis: the causative agent of proliferative enteropathy.</title>
        <authorList>
            <person name="Kaur K."/>
            <person name="Zhang Q."/>
            <person name="Beckler D."/>
            <person name="Munir S."/>
            <person name="Li L."/>
            <person name="Kinsley K."/>
            <person name="Herron L."/>
            <person name="Peterson A."/>
            <person name="May B."/>
            <person name="Singh S."/>
            <person name="Gebhart C."/>
            <person name="Kapur V."/>
        </authorList>
    </citation>
    <scope>NUCLEOTIDE SEQUENCE [LARGE SCALE GENOMIC DNA]</scope>
    <source>
        <strain>PHE/MN1-00</strain>
    </source>
</reference>
<dbReference type="EMBL" id="AM180252">
    <property type="protein sequence ID" value="CAJ54281.1"/>
    <property type="molecule type" value="Genomic_DNA"/>
</dbReference>
<dbReference type="RefSeq" id="WP_011526307.1">
    <property type="nucleotide sequence ID" value="NC_008011.1"/>
</dbReference>
<dbReference type="SMR" id="Q1MRU5"/>
<dbReference type="STRING" id="363253.LI0225"/>
<dbReference type="KEGG" id="lip:LI0225"/>
<dbReference type="eggNOG" id="COG0691">
    <property type="taxonomic scope" value="Bacteria"/>
</dbReference>
<dbReference type="HOGENOM" id="CLU_108953_0_1_7"/>
<dbReference type="OrthoDB" id="9805462at2"/>
<dbReference type="Proteomes" id="UP000002430">
    <property type="component" value="Chromosome"/>
</dbReference>
<dbReference type="GO" id="GO:0005829">
    <property type="term" value="C:cytosol"/>
    <property type="evidence" value="ECO:0007669"/>
    <property type="project" value="TreeGrafter"/>
</dbReference>
<dbReference type="GO" id="GO:0003723">
    <property type="term" value="F:RNA binding"/>
    <property type="evidence" value="ECO:0007669"/>
    <property type="project" value="UniProtKB-UniRule"/>
</dbReference>
<dbReference type="GO" id="GO:0070929">
    <property type="term" value="P:trans-translation"/>
    <property type="evidence" value="ECO:0007669"/>
    <property type="project" value="UniProtKB-UniRule"/>
</dbReference>
<dbReference type="CDD" id="cd09294">
    <property type="entry name" value="SmpB"/>
    <property type="match status" value="1"/>
</dbReference>
<dbReference type="Gene3D" id="2.40.280.10">
    <property type="match status" value="1"/>
</dbReference>
<dbReference type="HAMAP" id="MF_00023">
    <property type="entry name" value="SmpB"/>
    <property type="match status" value="1"/>
</dbReference>
<dbReference type="InterPro" id="IPR023620">
    <property type="entry name" value="SmpB"/>
</dbReference>
<dbReference type="InterPro" id="IPR000037">
    <property type="entry name" value="SsrA-bd_prot"/>
</dbReference>
<dbReference type="InterPro" id="IPR020081">
    <property type="entry name" value="SsrA-bd_prot_CS"/>
</dbReference>
<dbReference type="NCBIfam" id="NF003843">
    <property type="entry name" value="PRK05422.1"/>
    <property type="match status" value="1"/>
</dbReference>
<dbReference type="NCBIfam" id="TIGR00086">
    <property type="entry name" value="smpB"/>
    <property type="match status" value="1"/>
</dbReference>
<dbReference type="PANTHER" id="PTHR30308:SF2">
    <property type="entry name" value="SSRA-BINDING PROTEIN"/>
    <property type="match status" value="1"/>
</dbReference>
<dbReference type="PANTHER" id="PTHR30308">
    <property type="entry name" value="TMRNA-BINDING COMPONENT OF TRANS-TRANSLATION TAGGING COMPLEX"/>
    <property type="match status" value="1"/>
</dbReference>
<dbReference type="Pfam" id="PF01668">
    <property type="entry name" value="SmpB"/>
    <property type="match status" value="1"/>
</dbReference>
<dbReference type="SUPFAM" id="SSF74982">
    <property type="entry name" value="Small protein B (SmpB)"/>
    <property type="match status" value="1"/>
</dbReference>
<dbReference type="PROSITE" id="PS01317">
    <property type="entry name" value="SSRP"/>
    <property type="match status" value="1"/>
</dbReference>
<comment type="function">
    <text evidence="1">Required for rescue of stalled ribosomes mediated by trans-translation. Binds to transfer-messenger RNA (tmRNA), required for stable association of tmRNA with ribosomes. tmRNA and SmpB together mimic tRNA shape, replacing the anticodon stem-loop with SmpB. tmRNA is encoded by the ssrA gene; the 2 termini fold to resemble tRNA(Ala) and it encodes a 'tag peptide', a short internal open reading frame. During trans-translation Ala-aminoacylated tmRNA acts like a tRNA, entering the A-site of stalled ribosomes, displacing the stalled mRNA. The ribosome then switches to translate the ORF on the tmRNA; the nascent peptide is terminated with the 'tag peptide' encoded by the tmRNA and targeted for degradation. The ribosome is freed to recommence translation, which seems to be the essential function of trans-translation.</text>
</comment>
<comment type="subcellular location">
    <subcellularLocation>
        <location evidence="1">Cytoplasm</location>
    </subcellularLocation>
    <text evidence="1">The tmRNA-SmpB complex associates with stalled 70S ribosomes.</text>
</comment>
<comment type="similarity">
    <text evidence="1">Belongs to the SmpB family.</text>
</comment>
<organism>
    <name type="scientific">Lawsonia intracellularis (strain PHE/MN1-00)</name>
    <dbReference type="NCBI Taxonomy" id="363253"/>
    <lineage>
        <taxon>Bacteria</taxon>
        <taxon>Pseudomonadati</taxon>
        <taxon>Thermodesulfobacteriota</taxon>
        <taxon>Desulfovibrionia</taxon>
        <taxon>Desulfovibrionales</taxon>
        <taxon>Desulfovibrionaceae</taxon>
        <taxon>Lawsonia</taxon>
    </lineage>
</organism>
<protein>
    <recommendedName>
        <fullName evidence="1">SsrA-binding protein</fullName>
    </recommendedName>
    <alternativeName>
        <fullName evidence="1">Small protein B</fullName>
    </alternativeName>
</protein>
<name>SSRP_LAWIP</name>